<name>EX7L_STRP7</name>
<feature type="chain" id="PRO_1000200681" description="Exodeoxyribonuclease 7 large subunit">
    <location>
        <begin position="1"/>
        <end position="446"/>
    </location>
</feature>
<comment type="function">
    <text evidence="1">Bidirectionally degrades single-stranded DNA into large acid-insoluble oligonucleotides, which are then degraded further into small acid-soluble oligonucleotides.</text>
</comment>
<comment type="catalytic activity">
    <reaction evidence="1">
        <text>Exonucleolytic cleavage in either 5'- to 3'- or 3'- to 5'-direction to yield nucleoside 5'-phosphates.</text>
        <dbReference type="EC" id="3.1.11.6"/>
    </reaction>
</comment>
<comment type="subunit">
    <text evidence="1">Heterooligomer composed of large and small subunits.</text>
</comment>
<comment type="subcellular location">
    <subcellularLocation>
        <location evidence="1">Cytoplasm</location>
    </subcellularLocation>
</comment>
<comment type="similarity">
    <text evidence="1">Belongs to the XseA family.</text>
</comment>
<accession>C1C7H6</accession>
<keyword id="KW-0963">Cytoplasm</keyword>
<keyword id="KW-0269">Exonuclease</keyword>
<keyword id="KW-0378">Hydrolase</keyword>
<keyword id="KW-0540">Nuclease</keyword>
<gene>
    <name evidence="1" type="primary">xseA</name>
    <name type="ordered locus">SP70585_1257</name>
</gene>
<evidence type="ECO:0000255" key="1">
    <source>
        <dbReference type="HAMAP-Rule" id="MF_00378"/>
    </source>
</evidence>
<protein>
    <recommendedName>
        <fullName evidence="1">Exodeoxyribonuclease 7 large subunit</fullName>
        <ecNumber evidence="1">3.1.11.6</ecNumber>
    </recommendedName>
    <alternativeName>
        <fullName evidence="1">Exodeoxyribonuclease VII large subunit</fullName>
        <shortName evidence="1">Exonuclease VII large subunit</shortName>
    </alternativeName>
</protein>
<proteinExistence type="inferred from homology"/>
<reference key="1">
    <citation type="journal article" date="2010" name="Genome Biol.">
        <title>Structure and dynamics of the pan-genome of Streptococcus pneumoniae and closely related species.</title>
        <authorList>
            <person name="Donati C."/>
            <person name="Hiller N.L."/>
            <person name="Tettelin H."/>
            <person name="Muzzi A."/>
            <person name="Croucher N.J."/>
            <person name="Angiuoli S.V."/>
            <person name="Oggioni M."/>
            <person name="Dunning Hotopp J.C."/>
            <person name="Hu F.Z."/>
            <person name="Riley D.R."/>
            <person name="Covacci A."/>
            <person name="Mitchell T.J."/>
            <person name="Bentley S.D."/>
            <person name="Kilian M."/>
            <person name="Ehrlich G.D."/>
            <person name="Rappuoli R."/>
            <person name="Moxon E.R."/>
            <person name="Masignani V."/>
        </authorList>
    </citation>
    <scope>NUCLEOTIDE SEQUENCE [LARGE SCALE GENOMIC DNA]</scope>
    <source>
        <strain>70585</strain>
    </source>
</reference>
<dbReference type="EC" id="3.1.11.6" evidence="1"/>
<dbReference type="EMBL" id="CP000918">
    <property type="protein sequence ID" value="ACO17955.1"/>
    <property type="molecule type" value="Genomic_DNA"/>
</dbReference>
<dbReference type="RefSeq" id="WP_000417465.1">
    <property type="nucleotide sequence ID" value="NC_012468.1"/>
</dbReference>
<dbReference type="SMR" id="C1C7H6"/>
<dbReference type="KEGG" id="snm:SP70585_1257"/>
<dbReference type="HOGENOM" id="CLU_023625_3_1_9"/>
<dbReference type="Proteomes" id="UP000002211">
    <property type="component" value="Chromosome"/>
</dbReference>
<dbReference type="GO" id="GO:0005737">
    <property type="term" value="C:cytoplasm"/>
    <property type="evidence" value="ECO:0007669"/>
    <property type="project" value="UniProtKB-SubCell"/>
</dbReference>
<dbReference type="GO" id="GO:0009318">
    <property type="term" value="C:exodeoxyribonuclease VII complex"/>
    <property type="evidence" value="ECO:0007669"/>
    <property type="project" value="InterPro"/>
</dbReference>
<dbReference type="GO" id="GO:0008855">
    <property type="term" value="F:exodeoxyribonuclease VII activity"/>
    <property type="evidence" value="ECO:0007669"/>
    <property type="project" value="UniProtKB-UniRule"/>
</dbReference>
<dbReference type="GO" id="GO:0003676">
    <property type="term" value="F:nucleic acid binding"/>
    <property type="evidence" value="ECO:0007669"/>
    <property type="project" value="InterPro"/>
</dbReference>
<dbReference type="GO" id="GO:0006308">
    <property type="term" value="P:DNA catabolic process"/>
    <property type="evidence" value="ECO:0007669"/>
    <property type="project" value="UniProtKB-UniRule"/>
</dbReference>
<dbReference type="CDD" id="cd04489">
    <property type="entry name" value="ExoVII_LU_OBF"/>
    <property type="match status" value="1"/>
</dbReference>
<dbReference type="HAMAP" id="MF_00378">
    <property type="entry name" value="Exonuc_7_L"/>
    <property type="match status" value="1"/>
</dbReference>
<dbReference type="InterPro" id="IPR003753">
    <property type="entry name" value="Exonuc_VII_L"/>
</dbReference>
<dbReference type="InterPro" id="IPR020579">
    <property type="entry name" value="Exonuc_VII_lsu_C"/>
</dbReference>
<dbReference type="InterPro" id="IPR025824">
    <property type="entry name" value="OB-fold_nuc-bd_dom"/>
</dbReference>
<dbReference type="NCBIfam" id="TIGR00237">
    <property type="entry name" value="xseA"/>
    <property type="match status" value="1"/>
</dbReference>
<dbReference type="PANTHER" id="PTHR30008">
    <property type="entry name" value="EXODEOXYRIBONUCLEASE 7 LARGE SUBUNIT"/>
    <property type="match status" value="1"/>
</dbReference>
<dbReference type="PANTHER" id="PTHR30008:SF0">
    <property type="entry name" value="EXODEOXYRIBONUCLEASE 7 LARGE SUBUNIT"/>
    <property type="match status" value="1"/>
</dbReference>
<dbReference type="Pfam" id="PF02601">
    <property type="entry name" value="Exonuc_VII_L"/>
    <property type="match status" value="1"/>
</dbReference>
<dbReference type="Pfam" id="PF13742">
    <property type="entry name" value="tRNA_anti_2"/>
    <property type="match status" value="1"/>
</dbReference>
<organism>
    <name type="scientific">Streptococcus pneumoniae (strain 70585)</name>
    <dbReference type="NCBI Taxonomy" id="488221"/>
    <lineage>
        <taxon>Bacteria</taxon>
        <taxon>Bacillati</taxon>
        <taxon>Bacillota</taxon>
        <taxon>Bacilli</taxon>
        <taxon>Lactobacillales</taxon>
        <taxon>Streptococcaceae</taxon>
        <taxon>Streptococcus</taxon>
    </lineage>
</organism>
<sequence length="446" mass="50536">MEKYLSVTTLTKYLKMKFDKDPYLERVYLTGQVSNFRKRPTHQYFSLKDDHAVIQATIWSGIYQKLGFDLEEGMKINVIGRVQVYEPSGSYSIIIEKAEPDGVGALAIQFEQLKKKLTEEGLFQERFKQALPQFSKRIGVVTSRSGAVIRDIITTVSRRFPGVDILLYPTKVQGEGAAEEIARNIARANQRDDLDLLIIGRGGGSIEDLWAFNEEIVVRAIFESRLPVISSVGHETDVTLADFVADRRAATPTAAAELATPVTKLDVLAHLQNQEKRMVTAVRNVLSKKQEALKKCSQSVIFRQPERLYDGYLQRLDQLQLRLKQSLRTRISDNKQLVQARTHQLVQLSPVTKIQRYQDRLGQLDKLLGSQMALVYDAKVAEVKRLSEALLMLDTSRIVARGYAIVKKEESVVDSVESLKKKDQVTLLMRDGQVELEVKDVKTKEI</sequence>